<sequence length="460" mass="48844">MQPPAFKELWIILRLAGPLIASQMAHMLMVFTDTVMMGKIGPEALAGGGLGAATYSFISFFCVGVMAAVGTLVSIRHGAGDSEGVTRLTQAGLWLAWGMALIAALLLWNLEPILLQLGQAEANVHMAAQFLITLPFALPGLLSFMALRGFTSALGRAGPVMTISVAGAVANFVLNYAMINQWLGLPNLGLMGIGLVTAMVTNCMALALAWHIKRHPAYAAYPISKGLSKLSRSHLKELWRLGLPIGGTYAVEVGLFTFAAFCMGAMGSTQMAAHQIALQTVSMAFMIPVGISYAVTMRIGQHYGAGNILMARTAGRLGIGFGGSVMLLFGIFFWLAPHWVIGLFLDLDDPAFAEIVVLAAKLLAIAAWFEFFDGTQTIAMGAIRGLKDARTTFLIGLGCYWLIAAPAAWLLGFYADGGASGVWWGLALGLFCSAVALTYAFEWKTARLLRKEAVGAAVPG</sequence>
<proteinExistence type="inferred from homology"/>
<name>NORM_PSESM</name>
<accession>Q88BA2</accession>
<reference key="1">
    <citation type="journal article" date="2003" name="Proc. Natl. Acad. Sci. U.S.A.">
        <title>The complete genome sequence of the Arabidopsis and tomato pathogen Pseudomonas syringae pv. tomato DC3000.</title>
        <authorList>
            <person name="Buell C.R."/>
            <person name="Joardar V."/>
            <person name="Lindeberg M."/>
            <person name="Selengut J."/>
            <person name="Paulsen I.T."/>
            <person name="Gwinn M.L."/>
            <person name="Dodson R.J."/>
            <person name="DeBoy R.T."/>
            <person name="Durkin A.S."/>
            <person name="Kolonay J.F."/>
            <person name="Madupu R."/>
            <person name="Daugherty S.C."/>
            <person name="Brinkac L.M."/>
            <person name="Beanan M.J."/>
            <person name="Haft D.H."/>
            <person name="Nelson W.C."/>
            <person name="Davidsen T.M."/>
            <person name="Zafar N."/>
            <person name="Zhou L."/>
            <person name="Liu J."/>
            <person name="Yuan Q."/>
            <person name="Khouri H.M."/>
            <person name="Fedorova N.B."/>
            <person name="Tran B."/>
            <person name="Russell D."/>
            <person name="Berry K.J."/>
            <person name="Utterback T.R."/>
            <person name="Van Aken S.E."/>
            <person name="Feldblyum T.V."/>
            <person name="D'Ascenzo M."/>
            <person name="Deng W.-L."/>
            <person name="Ramos A.R."/>
            <person name="Alfano J.R."/>
            <person name="Cartinhour S."/>
            <person name="Chatterjee A.K."/>
            <person name="Delaney T.P."/>
            <person name="Lazarowitz S.G."/>
            <person name="Martin G.B."/>
            <person name="Schneider D.J."/>
            <person name="Tang X."/>
            <person name="Bender C.L."/>
            <person name="White O."/>
            <person name="Fraser C.M."/>
            <person name="Collmer A."/>
        </authorList>
    </citation>
    <scope>NUCLEOTIDE SEQUENCE [LARGE SCALE GENOMIC DNA]</scope>
    <source>
        <strain>ATCC BAA-871 / DC3000</strain>
    </source>
</reference>
<evidence type="ECO:0000250" key="1"/>
<evidence type="ECO:0000255" key="2"/>
<evidence type="ECO:0000305" key="3"/>
<keyword id="KW-0050">Antiport</keyword>
<keyword id="KW-0997">Cell inner membrane</keyword>
<keyword id="KW-1003">Cell membrane</keyword>
<keyword id="KW-0406">Ion transport</keyword>
<keyword id="KW-0472">Membrane</keyword>
<keyword id="KW-1185">Reference proteome</keyword>
<keyword id="KW-0812">Transmembrane</keyword>
<keyword id="KW-1133">Transmembrane helix</keyword>
<keyword id="KW-0813">Transport</keyword>
<protein>
    <recommendedName>
        <fullName>Probable multidrug resistance protein NorM</fullName>
    </recommendedName>
    <alternativeName>
        <fullName>Multidrug-efflux transporter</fullName>
    </alternativeName>
</protein>
<dbReference type="EMBL" id="AE016853">
    <property type="protein sequence ID" value="AAO53669.1"/>
    <property type="molecule type" value="Genomic_DNA"/>
</dbReference>
<dbReference type="RefSeq" id="NP_789974.1">
    <property type="nucleotide sequence ID" value="NC_004578.1"/>
</dbReference>
<dbReference type="RefSeq" id="WP_011102995.1">
    <property type="nucleotide sequence ID" value="NC_004578.1"/>
</dbReference>
<dbReference type="SMR" id="Q88BA2"/>
<dbReference type="STRING" id="223283.PSPTO_0115"/>
<dbReference type="GeneID" id="1181723"/>
<dbReference type="KEGG" id="pst:PSPTO_0115"/>
<dbReference type="PATRIC" id="fig|223283.9.peg.119"/>
<dbReference type="eggNOG" id="COG0534">
    <property type="taxonomic scope" value="Bacteria"/>
</dbReference>
<dbReference type="HOGENOM" id="CLU_012893_6_3_6"/>
<dbReference type="OrthoDB" id="9780160at2"/>
<dbReference type="PhylomeDB" id="Q88BA2"/>
<dbReference type="Proteomes" id="UP000002515">
    <property type="component" value="Chromosome"/>
</dbReference>
<dbReference type="GO" id="GO:0005886">
    <property type="term" value="C:plasma membrane"/>
    <property type="evidence" value="ECO:0007669"/>
    <property type="project" value="UniProtKB-SubCell"/>
</dbReference>
<dbReference type="GO" id="GO:0015297">
    <property type="term" value="F:antiporter activity"/>
    <property type="evidence" value="ECO:0007669"/>
    <property type="project" value="UniProtKB-KW"/>
</dbReference>
<dbReference type="GO" id="GO:0042910">
    <property type="term" value="F:xenobiotic transmembrane transporter activity"/>
    <property type="evidence" value="ECO:0007669"/>
    <property type="project" value="InterPro"/>
</dbReference>
<dbReference type="GO" id="GO:0006811">
    <property type="term" value="P:monoatomic ion transport"/>
    <property type="evidence" value="ECO:0007669"/>
    <property type="project" value="UniProtKB-KW"/>
</dbReference>
<dbReference type="CDD" id="cd13131">
    <property type="entry name" value="MATE_NorM_like"/>
    <property type="match status" value="1"/>
</dbReference>
<dbReference type="InterPro" id="IPR002528">
    <property type="entry name" value="MATE_fam"/>
</dbReference>
<dbReference type="InterPro" id="IPR050222">
    <property type="entry name" value="MATE_MdtK"/>
</dbReference>
<dbReference type="InterPro" id="IPR048279">
    <property type="entry name" value="MdtK-like"/>
</dbReference>
<dbReference type="NCBIfam" id="TIGR00797">
    <property type="entry name" value="matE"/>
    <property type="match status" value="1"/>
</dbReference>
<dbReference type="NCBIfam" id="NF001214">
    <property type="entry name" value="PRK00187.1"/>
    <property type="match status" value="1"/>
</dbReference>
<dbReference type="PANTHER" id="PTHR43298:SF2">
    <property type="entry name" value="FMN_FAD EXPORTER YEEO-RELATED"/>
    <property type="match status" value="1"/>
</dbReference>
<dbReference type="PANTHER" id="PTHR43298">
    <property type="entry name" value="MULTIDRUG RESISTANCE PROTEIN NORM-RELATED"/>
    <property type="match status" value="1"/>
</dbReference>
<dbReference type="Pfam" id="PF01554">
    <property type="entry name" value="MatE"/>
    <property type="match status" value="2"/>
</dbReference>
<dbReference type="PIRSF" id="PIRSF006603">
    <property type="entry name" value="DinF"/>
    <property type="match status" value="1"/>
</dbReference>
<gene>
    <name type="primary">norM</name>
    <name type="ordered locus">PSPTO_0115</name>
</gene>
<feature type="chain" id="PRO_0000164234" description="Probable multidrug resistance protein NorM">
    <location>
        <begin position="1"/>
        <end position="460"/>
    </location>
</feature>
<feature type="transmembrane region" description="Helical" evidence="2">
    <location>
        <begin position="9"/>
        <end position="31"/>
    </location>
</feature>
<feature type="transmembrane region" description="Helical" evidence="2">
    <location>
        <begin position="51"/>
        <end position="73"/>
    </location>
</feature>
<feature type="transmembrane region" description="Helical" evidence="2">
    <location>
        <begin position="93"/>
        <end position="115"/>
    </location>
</feature>
<feature type="transmembrane region" description="Helical" evidence="2">
    <location>
        <begin position="125"/>
        <end position="147"/>
    </location>
</feature>
<feature type="transmembrane region" description="Helical" evidence="2">
    <location>
        <begin position="160"/>
        <end position="179"/>
    </location>
</feature>
<feature type="transmembrane region" description="Helical" evidence="2">
    <location>
        <begin position="189"/>
        <end position="211"/>
    </location>
</feature>
<feature type="transmembrane region" description="Helical" evidence="2">
    <location>
        <begin position="238"/>
        <end position="260"/>
    </location>
</feature>
<feature type="transmembrane region" description="Helical" evidence="2">
    <location>
        <begin position="275"/>
        <end position="297"/>
    </location>
</feature>
<feature type="transmembrane region" description="Helical" evidence="2">
    <location>
        <begin position="318"/>
        <end position="340"/>
    </location>
</feature>
<feature type="transmembrane region" description="Helical" evidence="2">
    <location>
        <begin position="350"/>
        <end position="372"/>
    </location>
</feature>
<feature type="transmembrane region" description="Helical" evidence="2">
    <location>
        <begin position="393"/>
        <end position="415"/>
    </location>
</feature>
<feature type="transmembrane region" description="Helical" evidence="2">
    <location>
        <begin position="419"/>
        <end position="441"/>
    </location>
</feature>
<comment type="function">
    <text evidence="1">Multidrug efflux pump.</text>
</comment>
<comment type="subcellular location">
    <subcellularLocation>
        <location evidence="1">Cell inner membrane</location>
        <topology evidence="1">Multi-pass membrane protein</topology>
    </subcellularLocation>
</comment>
<comment type="similarity">
    <text evidence="3">Belongs to the multi antimicrobial extrusion (MATE) (TC 2.A.66.1) family.</text>
</comment>
<organism>
    <name type="scientific">Pseudomonas syringae pv. tomato (strain ATCC BAA-871 / DC3000)</name>
    <dbReference type="NCBI Taxonomy" id="223283"/>
    <lineage>
        <taxon>Bacteria</taxon>
        <taxon>Pseudomonadati</taxon>
        <taxon>Pseudomonadota</taxon>
        <taxon>Gammaproteobacteria</taxon>
        <taxon>Pseudomonadales</taxon>
        <taxon>Pseudomonadaceae</taxon>
        <taxon>Pseudomonas</taxon>
    </lineage>
</organism>